<sequence>MEQLIRDEMRVLPSIDPHFEVTRRVEFIKTKLQQSGCKSLILGISGGVDSTTCGRLAQMAVDSLNESAGSDEYQFIAVRLPYGEQKDEDEAQLALSFIQPSQSVSVNIKAGVDGLHAASHVALEGTGLLPTDSAKIDFVKGNVKARARMIAQYEIAGYVGGLVIGTDHSAENITGFYTKHGDGACDLAPLFGLNKRQVRELAATLGAPEQLVKKVPTADLEELDPQKADEAALNLSYDQIDDFLEGKAVSQDVSDRLVGIYKATQHKRQPIPTIYD</sequence>
<evidence type="ECO:0000255" key="1">
    <source>
        <dbReference type="HAMAP-Rule" id="MF_00193"/>
    </source>
</evidence>
<gene>
    <name evidence="1" type="primary">nadE</name>
    <name type="ordered locus">VS_II0275</name>
</gene>
<accession>B7VQP3</accession>
<reference key="1">
    <citation type="submission" date="2009-02" db="EMBL/GenBank/DDBJ databases">
        <title>Vibrio splendidus str. LGP32 complete genome.</title>
        <authorList>
            <person name="Mazel D."/>
            <person name="Le Roux F."/>
        </authorList>
    </citation>
    <scope>NUCLEOTIDE SEQUENCE [LARGE SCALE GENOMIC DNA]</scope>
    <source>
        <strain>LGP32</strain>
    </source>
</reference>
<protein>
    <recommendedName>
        <fullName evidence="1">NH(3)-dependent NAD(+) synthetase</fullName>
        <ecNumber evidence="1">6.3.1.5</ecNumber>
    </recommendedName>
</protein>
<proteinExistence type="inferred from homology"/>
<keyword id="KW-0067">ATP-binding</keyword>
<keyword id="KW-0436">Ligase</keyword>
<keyword id="KW-0460">Magnesium</keyword>
<keyword id="KW-0479">Metal-binding</keyword>
<keyword id="KW-0520">NAD</keyword>
<keyword id="KW-0547">Nucleotide-binding</keyword>
<organism>
    <name type="scientific">Vibrio atlanticus (strain LGP32)</name>
    <name type="common">Vibrio splendidus (strain Mel32)</name>
    <dbReference type="NCBI Taxonomy" id="575788"/>
    <lineage>
        <taxon>Bacteria</taxon>
        <taxon>Pseudomonadati</taxon>
        <taxon>Pseudomonadota</taxon>
        <taxon>Gammaproteobacteria</taxon>
        <taxon>Vibrionales</taxon>
        <taxon>Vibrionaceae</taxon>
        <taxon>Vibrio</taxon>
    </lineage>
</organism>
<comment type="function">
    <text evidence="1">Catalyzes the ATP-dependent amidation of deamido-NAD to form NAD. Uses ammonia as a nitrogen source.</text>
</comment>
<comment type="catalytic activity">
    <reaction evidence="1">
        <text>deamido-NAD(+) + NH4(+) + ATP = AMP + diphosphate + NAD(+) + H(+)</text>
        <dbReference type="Rhea" id="RHEA:21188"/>
        <dbReference type="ChEBI" id="CHEBI:15378"/>
        <dbReference type="ChEBI" id="CHEBI:28938"/>
        <dbReference type="ChEBI" id="CHEBI:30616"/>
        <dbReference type="ChEBI" id="CHEBI:33019"/>
        <dbReference type="ChEBI" id="CHEBI:57540"/>
        <dbReference type="ChEBI" id="CHEBI:58437"/>
        <dbReference type="ChEBI" id="CHEBI:456215"/>
        <dbReference type="EC" id="6.3.1.5"/>
    </reaction>
</comment>
<comment type="pathway">
    <text evidence="1">Cofactor biosynthesis; NAD(+) biosynthesis; NAD(+) from deamido-NAD(+) (ammonia route): step 1/1.</text>
</comment>
<comment type="subunit">
    <text evidence="1">Homodimer.</text>
</comment>
<comment type="similarity">
    <text evidence="1">Belongs to the NAD synthetase family.</text>
</comment>
<name>NADE_VIBA3</name>
<feature type="chain" id="PRO_1000191516" description="NH(3)-dependent NAD(+) synthetase">
    <location>
        <begin position="1"/>
        <end position="276"/>
    </location>
</feature>
<feature type="binding site" evidence="1">
    <location>
        <begin position="43"/>
        <end position="50"/>
    </location>
    <ligand>
        <name>ATP</name>
        <dbReference type="ChEBI" id="CHEBI:30616"/>
    </ligand>
</feature>
<feature type="binding site" evidence="1">
    <location>
        <position position="49"/>
    </location>
    <ligand>
        <name>Mg(2+)</name>
        <dbReference type="ChEBI" id="CHEBI:18420"/>
    </ligand>
</feature>
<feature type="binding site" evidence="1">
    <location>
        <position position="146"/>
    </location>
    <ligand>
        <name>deamido-NAD(+)</name>
        <dbReference type="ChEBI" id="CHEBI:58437"/>
    </ligand>
</feature>
<feature type="binding site" evidence="1">
    <location>
        <position position="166"/>
    </location>
    <ligand>
        <name>ATP</name>
        <dbReference type="ChEBI" id="CHEBI:30616"/>
    </ligand>
</feature>
<feature type="binding site" evidence="1">
    <location>
        <position position="171"/>
    </location>
    <ligand>
        <name>Mg(2+)</name>
        <dbReference type="ChEBI" id="CHEBI:18420"/>
    </ligand>
</feature>
<feature type="binding site" evidence="1">
    <location>
        <position position="179"/>
    </location>
    <ligand>
        <name>deamido-NAD(+)</name>
        <dbReference type="ChEBI" id="CHEBI:58437"/>
    </ligand>
</feature>
<feature type="binding site" evidence="1">
    <location>
        <position position="186"/>
    </location>
    <ligand>
        <name>deamido-NAD(+)</name>
        <dbReference type="ChEBI" id="CHEBI:58437"/>
    </ligand>
</feature>
<feature type="binding site" evidence="1">
    <location>
        <position position="195"/>
    </location>
    <ligand>
        <name>ATP</name>
        <dbReference type="ChEBI" id="CHEBI:30616"/>
    </ligand>
</feature>
<feature type="binding site" evidence="1">
    <location>
        <position position="217"/>
    </location>
    <ligand>
        <name>ATP</name>
        <dbReference type="ChEBI" id="CHEBI:30616"/>
    </ligand>
</feature>
<feature type="binding site" evidence="1">
    <location>
        <begin position="266"/>
        <end position="267"/>
    </location>
    <ligand>
        <name>deamido-NAD(+)</name>
        <dbReference type="ChEBI" id="CHEBI:58437"/>
    </ligand>
</feature>
<dbReference type="EC" id="6.3.1.5" evidence="1"/>
<dbReference type="EMBL" id="FM954973">
    <property type="protein sequence ID" value="CAV25662.1"/>
    <property type="molecule type" value="Genomic_DNA"/>
</dbReference>
<dbReference type="SMR" id="B7VQP3"/>
<dbReference type="STRING" id="575788.VS_II0275"/>
<dbReference type="KEGG" id="vsp:VS_II0275"/>
<dbReference type="PATRIC" id="fig|575788.5.peg.269"/>
<dbReference type="eggNOG" id="COG0171">
    <property type="taxonomic scope" value="Bacteria"/>
</dbReference>
<dbReference type="HOGENOM" id="CLU_059327_3_0_6"/>
<dbReference type="UniPathway" id="UPA00253">
    <property type="reaction ID" value="UER00333"/>
</dbReference>
<dbReference type="Proteomes" id="UP000009100">
    <property type="component" value="Chromosome 2"/>
</dbReference>
<dbReference type="GO" id="GO:0005737">
    <property type="term" value="C:cytoplasm"/>
    <property type="evidence" value="ECO:0007669"/>
    <property type="project" value="InterPro"/>
</dbReference>
<dbReference type="GO" id="GO:0005524">
    <property type="term" value="F:ATP binding"/>
    <property type="evidence" value="ECO:0007669"/>
    <property type="project" value="UniProtKB-UniRule"/>
</dbReference>
<dbReference type="GO" id="GO:0004359">
    <property type="term" value="F:glutaminase activity"/>
    <property type="evidence" value="ECO:0007669"/>
    <property type="project" value="InterPro"/>
</dbReference>
<dbReference type="GO" id="GO:0046872">
    <property type="term" value="F:metal ion binding"/>
    <property type="evidence" value="ECO:0007669"/>
    <property type="project" value="UniProtKB-KW"/>
</dbReference>
<dbReference type="GO" id="GO:0003952">
    <property type="term" value="F:NAD+ synthase (glutamine-hydrolyzing) activity"/>
    <property type="evidence" value="ECO:0007669"/>
    <property type="project" value="InterPro"/>
</dbReference>
<dbReference type="GO" id="GO:0008795">
    <property type="term" value="F:NAD+ synthase activity"/>
    <property type="evidence" value="ECO:0007669"/>
    <property type="project" value="UniProtKB-UniRule"/>
</dbReference>
<dbReference type="GO" id="GO:0009435">
    <property type="term" value="P:NAD biosynthetic process"/>
    <property type="evidence" value="ECO:0007669"/>
    <property type="project" value="UniProtKB-UniRule"/>
</dbReference>
<dbReference type="CDD" id="cd00553">
    <property type="entry name" value="NAD_synthase"/>
    <property type="match status" value="1"/>
</dbReference>
<dbReference type="FunFam" id="3.40.50.620:FF:000015">
    <property type="entry name" value="NH(3)-dependent NAD(+) synthetase"/>
    <property type="match status" value="1"/>
</dbReference>
<dbReference type="Gene3D" id="3.40.50.620">
    <property type="entry name" value="HUPs"/>
    <property type="match status" value="1"/>
</dbReference>
<dbReference type="HAMAP" id="MF_00193">
    <property type="entry name" value="NadE_ammonia_dep"/>
    <property type="match status" value="1"/>
</dbReference>
<dbReference type="InterPro" id="IPR022310">
    <property type="entry name" value="NAD/GMP_synthase"/>
</dbReference>
<dbReference type="InterPro" id="IPR003694">
    <property type="entry name" value="NAD_synthase"/>
</dbReference>
<dbReference type="InterPro" id="IPR022926">
    <property type="entry name" value="NH(3)-dep_NAD(+)_synth"/>
</dbReference>
<dbReference type="InterPro" id="IPR014729">
    <property type="entry name" value="Rossmann-like_a/b/a_fold"/>
</dbReference>
<dbReference type="NCBIfam" id="TIGR00552">
    <property type="entry name" value="nadE"/>
    <property type="match status" value="1"/>
</dbReference>
<dbReference type="NCBIfam" id="NF001979">
    <property type="entry name" value="PRK00768.1"/>
    <property type="match status" value="1"/>
</dbReference>
<dbReference type="PANTHER" id="PTHR23090">
    <property type="entry name" value="NH 3 /GLUTAMINE-DEPENDENT NAD + SYNTHETASE"/>
    <property type="match status" value="1"/>
</dbReference>
<dbReference type="PANTHER" id="PTHR23090:SF7">
    <property type="entry name" value="NH(3)-DEPENDENT NAD(+) SYNTHETASE"/>
    <property type="match status" value="1"/>
</dbReference>
<dbReference type="Pfam" id="PF02540">
    <property type="entry name" value="NAD_synthase"/>
    <property type="match status" value="1"/>
</dbReference>
<dbReference type="SUPFAM" id="SSF52402">
    <property type="entry name" value="Adenine nucleotide alpha hydrolases-like"/>
    <property type="match status" value="1"/>
</dbReference>